<evidence type="ECO:0000255" key="1">
    <source>
        <dbReference type="HAMAP-Rule" id="MF_00046"/>
    </source>
</evidence>
<evidence type="ECO:0000256" key="2">
    <source>
        <dbReference type="SAM" id="MobiDB-lite"/>
    </source>
</evidence>
<protein>
    <recommendedName>
        <fullName evidence="1">UDP-N-acetylmuramate--L-alanine ligase</fullName>
        <ecNumber evidence="1">6.3.2.8</ecNumber>
    </recommendedName>
    <alternativeName>
        <fullName evidence="1">UDP-N-acetylmuramoyl-L-alanine synthetase</fullName>
    </alternativeName>
</protein>
<gene>
    <name evidence="1" type="primary">murC</name>
    <name type="ordered locus">Strop_3212</name>
</gene>
<dbReference type="EC" id="6.3.2.8" evidence="1"/>
<dbReference type="EMBL" id="CP000667">
    <property type="protein sequence ID" value="ABP55646.1"/>
    <property type="molecule type" value="Genomic_DNA"/>
</dbReference>
<dbReference type="RefSeq" id="WP_012014423.1">
    <property type="nucleotide sequence ID" value="NC_009380.1"/>
</dbReference>
<dbReference type="SMR" id="A4X9R5"/>
<dbReference type="STRING" id="369723.Strop_3212"/>
<dbReference type="KEGG" id="stp:Strop_3212"/>
<dbReference type="PATRIC" id="fig|369723.5.peg.3304"/>
<dbReference type="eggNOG" id="COG0773">
    <property type="taxonomic scope" value="Bacteria"/>
</dbReference>
<dbReference type="HOGENOM" id="CLU_028104_2_2_11"/>
<dbReference type="UniPathway" id="UPA00219"/>
<dbReference type="Proteomes" id="UP000000235">
    <property type="component" value="Chromosome"/>
</dbReference>
<dbReference type="GO" id="GO:0005737">
    <property type="term" value="C:cytoplasm"/>
    <property type="evidence" value="ECO:0007669"/>
    <property type="project" value="UniProtKB-SubCell"/>
</dbReference>
<dbReference type="GO" id="GO:0005524">
    <property type="term" value="F:ATP binding"/>
    <property type="evidence" value="ECO:0007669"/>
    <property type="project" value="UniProtKB-UniRule"/>
</dbReference>
<dbReference type="GO" id="GO:0008763">
    <property type="term" value="F:UDP-N-acetylmuramate-L-alanine ligase activity"/>
    <property type="evidence" value="ECO:0007669"/>
    <property type="project" value="UniProtKB-UniRule"/>
</dbReference>
<dbReference type="GO" id="GO:0051301">
    <property type="term" value="P:cell division"/>
    <property type="evidence" value="ECO:0007669"/>
    <property type="project" value="UniProtKB-KW"/>
</dbReference>
<dbReference type="GO" id="GO:0071555">
    <property type="term" value="P:cell wall organization"/>
    <property type="evidence" value="ECO:0007669"/>
    <property type="project" value="UniProtKB-KW"/>
</dbReference>
<dbReference type="GO" id="GO:0009252">
    <property type="term" value="P:peptidoglycan biosynthetic process"/>
    <property type="evidence" value="ECO:0007669"/>
    <property type="project" value="UniProtKB-UniRule"/>
</dbReference>
<dbReference type="GO" id="GO:0008360">
    <property type="term" value="P:regulation of cell shape"/>
    <property type="evidence" value="ECO:0007669"/>
    <property type="project" value="UniProtKB-KW"/>
</dbReference>
<dbReference type="Gene3D" id="3.90.190.20">
    <property type="entry name" value="Mur ligase, C-terminal domain"/>
    <property type="match status" value="1"/>
</dbReference>
<dbReference type="Gene3D" id="3.40.1190.10">
    <property type="entry name" value="Mur-like, catalytic domain"/>
    <property type="match status" value="1"/>
</dbReference>
<dbReference type="Gene3D" id="3.40.50.720">
    <property type="entry name" value="NAD(P)-binding Rossmann-like Domain"/>
    <property type="match status" value="1"/>
</dbReference>
<dbReference type="HAMAP" id="MF_00046">
    <property type="entry name" value="MurC"/>
    <property type="match status" value="1"/>
</dbReference>
<dbReference type="InterPro" id="IPR036565">
    <property type="entry name" value="Mur-like_cat_sf"/>
</dbReference>
<dbReference type="InterPro" id="IPR004101">
    <property type="entry name" value="Mur_ligase_C"/>
</dbReference>
<dbReference type="InterPro" id="IPR036615">
    <property type="entry name" value="Mur_ligase_C_dom_sf"/>
</dbReference>
<dbReference type="InterPro" id="IPR013221">
    <property type="entry name" value="Mur_ligase_cen"/>
</dbReference>
<dbReference type="InterPro" id="IPR000713">
    <property type="entry name" value="Mur_ligase_N"/>
</dbReference>
<dbReference type="InterPro" id="IPR050061">
    <property type="entry name" value="MurCDEF_pg_biosynth"/>
</dbReference>
<dbReference type="InterPro" id="IPR005758">
    <property type="entry name" value="UDP-N-AcMur_Ala_ligase_MurC"/>
</dbReference>
<dbReference type="NCBIfam" id="TIGR01082">
    <property type="entry name" value="murC"/>
    <property type="match status" value="1"/>
</dbReference>
<dbReference type="PANTHER" id="PTHR43445:SF3">
    <property type="entry name" value="UDP-N-ACETYLMURAMATE--L-ALANINE LIGASE"/>
    <property type="match status" value="1"/>
</dbReference>
<dbReference type="PANTHER" id="PTHR43445">
    <property type="entry name" value="UDP-N-ACETYLMURAMATE--L-ALANINE LIGASE-RELATED"/>
    <property type="match status" value="1"/>
</dbReference>
<dbReference type="Pfam" id="PF01225">
    <property type="entry name" value="Mur_ligase"/>
    <property type="match status" value="1"/>
</dbReference>
<dbReference type="Pfam" id="PF02875">
    <property type="entry name" value="Mur_ligase_C"/>
    <property type="match status" value="1"/>
</dbReference>
<dbReference type="Pfam" id="PF08245">
    <property type="entry name" value="Mur_ligase_M"/>
    <property type="match status" value="1"/>
</dbReference>
<dbReference type="SUPFAM" id="SSF51984">
    <property type="entry name" value="MurCD N-terminal domain"/>
    <property type="match status" value="1"/>
</dbReference>
<dbReference type="SUPFAM" id="SSF53623">
    <property type="entry name" value="MurD-like peptide ligases, catalytic domain"/>
    <property type="match status" value="1"/>
</dbReference>
<dbReference type="SUPFAM" id="SSF53244">
    <property type="entry name" value="MurD-like peptide ligases, peptide-binding domain"/>
    <property type="match status" value="1"/>
</dbReference>
<keyword id="KW-0067">ATP-binding</keyword>
<keyword id="KW-0131">Cell cycle</keyword>
<keyword id="KW-0132">Cell division</keyword>
<keyword id="KW-0133">Cell shape</keyword>
<keyword id="KW-0961">Cell wall biogenesis/degradation</keyword>
<keyword id="KW-0963">Cytoplasm</keyword>
<keyword id="KW-0436">Ligase</keyword>
<keyword id="KW-0547">Nucleotide-binding</keyword>
<keyword id="KW-0573">Peptidoglycan synthesis</keyword>
<keyword id="KW-1185">Reference proteome</keyword>
<comment type="function">
    <text evidence="1">Cell wall formation.</text>
</comment>
<comment type="catalytic activity">
    <reaction evidence="1">
        <text>UDP-N-acetyl-alpha-D-muramate + L-alanine + ATP = UDP-N-acetyl-alpha-D-muramoyl-L-alanine + ADP + phosphate + H(+)</text>
        <dbReference type="Rhea" id="RHEA:23372"/>
        <dbReference type="ChEBI" id="CHEBI:15378"/>
        <dbReference type="ChEBI" id="CHEBI:30616"/>
        <dbReference type="ChEBI" id="CHEBI:43474"/>
        <dbReference type="ChEBI" id="CHEBI:57972"/>
        <dbReference type="ChEBI" id="CHEBI:70757"/>
        <dbReference type="ChEBI" id="CHEBI:83898"/>
        <dbReference type="ChEBI" id="CHEBI:456216"/>
        <dbReference type="EC" id="6.3.2.8"/>
    </reaction>
</comment>
<comment type="pathway">
    <text evidence="1">Cell wall biogenesis; peptidoglycan biosynthesis.</text>
</comment>
<comment type="subcellular location">
    <subcellularLocation>
        <location evidence="1">Cytoplasm</location>
    </subcellularLocation>
</comment>
<comment type="similarity">
    <text evidence="1">Belongs to the MurCDEF family.</text>
</comment>
<proteinExistence type="inferred from homology"/>
<organism>
    <name type="scientific">Salinispora tropica (strain ATCC BAA-916 / DSM 44818 / JCM 13857 / NBRC 105044 / CNB-440)</name>
    <dbReference type="NCBI Taxonomy" id="369723"/>
    <lineage>
        <taxon>Bacteria</taxon>
        <taxon>Bacillati</taxon>
        <taxon>Actinomycetota</taxon>
        <taxon>Actinomycetes</taxon>
        <taxon>Micromonosporales</taxon>
        <taxon>Micromonosporaceae</taxon>
        <taxon>Salinispora</taxon>
    </lineage>
</organism>
<sequence length="514" mass="54025">MSGKSAAKFSPAGRLTAEDLGAIHLIGAGGVGMSGLARLFLTRGISVSGSELREWPSLAGLRALGGTIHMSHEVANLDGVDTVVYSSAIPSDHLELVEARRRGLRVLHRSEALATAMTGRRTVAVAGTHGKTTTTSMVTMVLQQAGVDPSFVIGGEISEVGSGAHHGTGDYFVVEADESDRSFLIYRPFVSIITNIEADHLNTYGDLANLEAAFADFARLTDPDGFIITCADDVGGRRLAETLRAEGRRVYTYGISTDADLRLTEMASSTRGIRYLAEIDGRSLGEFRLPVPGRHMGLNSASAVLAEYLLDLPLEAAQSALAAFPGVRRRFERKGVADDVLVYDEYAYHPTPIALALRTLREVAGDGGLIVVFQPYRLYRTRDLQAEIAEALAIADELVLLEVFGPGELREPGEGSAALIEAVPLPVDRKVFVDSWDAAPVEVARRAKPGDVVVTMGAPPSSLMGDQLLDALSRRGAAGPAGTVPGGDVGGATTIGGTIPDIPGGSTPDASAAG</sequence>
<accession>A4X9R5</accession>
<feature type="chain" id="PRO_0000336868" description="UDP-N-acetylmuramate--L-alanine ligase">
    <location>
        <begin position="1"/>
        <end position="514"/>
    </location>
</feature>
<feature type="region of interest" description="Disordered" evidence="2">
    <location>
        <begin position="495"/>
        <end position="514"/>
    </location>
</feature>
<feature type="compositionally biased region" description="Low complexity" evidence="2">
    <location>
        <begin position="495"/>
        <end position="505"/>
    </location>
</feature>
<feature type="binding site" evidence="1">
    <location>
        <begin position="127"/>
        <end position="133"/>
    </location>
    <ligand>
        <name>ATP</name>
        <dbReference type="ChEBI" id="CHEBI:30616"/>
    </ligand>
</feature>
<name>MURC_SALTO</name>
<reference key="1">
    <citation type="journal article" date="2007" name="Proc. Natl. Acad. Sci. U.S.A.">
        <title>Genome sequencing reveals complex secondary metabolome in the marine actinomycete Salinispora tropica.</title>
        <authorList>
            <person name="Udwary D.W."/>
            <person name="Zeigler L."/>
            <person name="Asolkar R.N."/>
            <person name="Singan V."/>
            <person name="Lapidus A."/>
            <person name="Fenical W."/>
            <person name="Jensen P.R."/>
            <person name="Moore B.S."/>
        </authorList>
    </citation>
    <scope>NUCLEOTIDE SEQUENCE [LARGE SCALE GENOMIC DNA]</scope>
    <source>
        <strain>ATCC BAA-916 / DSM 44818 / JCM 13857 / NBRC 105044 / CNB-440</strain>
    </source>
</reference>